<accession>A0A455M7S4</accession>
<name>ATNG_ARTSZ</name>
<proteinExistence type="evidence at protein level"/>
<organism>
    <name type="scientific">Arthrinium sp</name>
    <dbReference type="NCBI Taxonomy" id="1756131"/>
    <lineage>
        <taxon>Eukaryota</taxon>
        <taxon>Fungi</taxon>
        <taxon>Dikarya</taxon>
        <taxon>Ascomycota</taxon>
        <taxon>Pezizomycotina</taxon>
        <taxon>Sordariomycetes</taxon>
        <taxon>Xylariomycetidae</taxon>
        <taxon>Amphisphaeriales</taxon>
        <taxon>Apiosporaceae</taxon>
        <taxon>Arthrinium</taxon>
    </lineage>
</organism>
<reference key="1">
    <citation type="journal article" date="2018" name="Angew. Chem. Int. Ed.">
        <title>Genome mining and comparative biosynthesis of meroterpenoids from two phylogenetically distinct fungi.</title>
        <authorList>
            <person name="Zhang X."/>
            <person name="Wang T.T."/>
            <person name="Xu Q.L."/>
            <person name="Xiong Y."/>
            <person name="Zhang L."/>
            <person name="Han H."/>
            <person name="Xu K."/>
            <person name="Guo W.J."/>
            <person name="Xu Q."/>
            <person name="Tan R.X."/>
            <person name="Ge H.M."/>
        </authorList>
    </citation>
    <scope>NUCLEOTIDE SEQUENCE [MRNA]</scope>
    <scope>DOMAIN</scope>
    <scope>FUNCTION</scope>
    <scope>CATALYTIC ACTIVITY</scope>
    <scope>DISRUPTION PHENOTYPE</scope>
    <scope>PATHWAY</scope>
    <source>
        <strain>NF2194</strain>
    </source>
</reference>
<dbReference type="EC" id="2.3.1.-" evidence="7"/>
<dbReference type="EMBL" id="MH183013">
    <property type="protein sequence ID" value="AYO60880.1"/>
    <property type="molecule type" value="mRNA"/>
</dbReference>
<dbReference type="SMR" id="A0A455M7S4"/>
<dbReference type="ESTHER" id="artsz-atng">
    <property type="family name" value="Thioesterase"/>
</dbReference>
<dbReference type="UniPathway" id="UPA00213"/>
<dbReference type="GO" id="GO:0004312">
    <property type="term" value="F:fatty acid synthase activity"/>
    <property type="evidence" value="ECO:0007669"/>
    <property type="project" value="TreeGrafter"/>
</dbReference>
<dbReference type="GO" id="GO:0031177">
    <property type="term" value="F:phosphopantetheine binding"/>
    <property type="evidence" value="ECO:0007669"/>
    <property type="project" value="InterPro"/>
</dbReference>
<dbReference type="GO" id="GO:0006633">
    <property type="term" value="P:fatty acid biosynthetic process"/>
    <property type="evidence" value="ECO:0007669"/>
    <property type="project" value="TreeGrafter"/>
</dbReference>
<dbReference type="GO" id="GO:0044550">
    <property type="term" value="P:secondary metabolite biosynthetic process"/>
    <property type="evidence" value="ECO:0007669"/>
    <property type="project" value="TreeGrafter"/>
</dbReference>
<dbReference type="GO" id="GO:0016114">
    <property type="term" value="P:terpenoid biosynthetic process"/>
    <property type="evidence" value="ECO:0007669"/>
    <property type="project" value="UniProtKB-UniPathway"/>
</dbReference>
<dbReference type="CDD" id="cd00833">
    <property type="entry name" value="PKS"/>
    <property type="match status" value="1"/>
</dbReference>
<dbReference type="Gene3D" id="3.30.70.3290">
    <property type="match status" value="1"/>
</dbReference>
<dbReference type="Gene3D" id="3.40.47.10">
    <property type="match status" value="1"/>
</dbReference>
<dbReference type="Gene3D" id="1.10.1200.10">
    <property type="entry name" value="ACP-like"/>
    <property type="match status" value="1"/>
</dbReference>
<dbReference type="Gene3D" id="3.40.50.1820">
    <property type="entry name" value="alpha/beta hydrolase"/>
    <property type="match status" value="1"/>
</dbReference>
<dbReference type="Gene3D" id="3.40.366.10">
    <property type="entry name" value="Malonyl-Coenzyme A Acyl Carrier Protein, domain 2"/>
    <property type="match status" value="2"/>
</dbReference>
<dbReference type="Gene3D" id="3.10.129.110">
    <property type="entry name" value="Polyketide synthase dehydratase"/>
    <property type="match status" value="1"/>
</dbReference>
<dbReference type="InterPro" id="IPR029058">
    <property type="entry name" value="AB_hydrolase_fold"/>
</dbReference>
<dbReference type="InterPro" id="IPR001227">
    <property type="entry name" value="Ac_transferase_dom_sf"/>
</dbReference>
<dbReference type="InterPro" id="IPR036736">
    <property type="entry name" value="ACP-like_sf"/>
</dbReference>
<dbReference type="InterPro" id="IPR014043">
    <property type="entry name" value="Acyl_transferase_dom"/>
</dbReference>
<dbReference type="InterPro" id="IPR016035">
    <property type="entry name" value="Acyl_Trfase/lysoPLipase"/>
</dbReference>
<dbReference type="InterPro" id="IPR014031">
    <property type="entry name" value="Ketoacyl_synth_C"/>
</dbReference>
<dbReference type="InterPro" id="IPR014030">
    <property type="entry name" value="Ketoacyl_synth_N"/>
</dbReference>
<dbReference type="InterPro" id="IPR016036">
    <property type="entry name" value="Malonyl_transacylase_ACP-bd"/>
</dbReference>
<dbReference type="InterPro" id="IPR020841">
    <property type="entry name" value="PKS_Beta-ketoAc_synthase_dom"/>
</dbReference>
<dbReference type="InterPro" id="IPR042104">
    <property type="entry name" value="PKS_dehydratase_sf"/>
</dbReference>
<dbReference type="InterPro" id="IPR049551">
    <property type="entry name" value="PKS_DH_C"/>
</dbReference>
<dbReference type="InterPro" id="IPR049552">
    <property type="entry name" value="PKS_DH_N"/>
</dbReference>
<dbReference type="InterPro" id="IPR049900">
    <property type="entry name" value="PKS_mFAS_DH"/>
</dbReference>
<dbReference type="InterPro" id="IPR050091">
    <property type="entry name" value="PKS_NRPS_Biosynth_Enz"/>
</dbReference>
<dbReference type="InterPro" id="IPR020806">
    <property type="entry name" value="PKS_PP-bd"/>
</dbReference>
<dbReference type="InterPro" id="IPR020802">
    <property type="entry name" value="PKS_thioesterase"/>
</dbReference>
<dbReference type="InterPro" id="IPR009081">
    <property type="entry name" value="PP-bd_ACP"/>
</dbReference>
<dbReference type="InterPro" id="IPR030918">
    <property type="entry name" value="PT_fungal_PKS"/>
</dbReference>
<dbReference type="InterPro" id="IPR032088">
    <property type="entry name" value="SAT"/>
</dbReference>
<dbReference type="InterPro" id="IPR001031">
    <property type="entry name" value="Thioesterase"/>
</dbReference>
<dbReference type="InterPro" id="IPR016039">
    <property type="entry name" value="Thiolase-like"/>
</dbReference>
<dbReference type="NCBIfam" id="TIGR04532">
    <property type="entry name" value="PT_fungal_PKS"/>
    <property type="match status" value="1"/>
</dbReference>
<dbReference type="PANTHER" id="PTHR43775">
    <property type="entry name" value="FATTY ACID SYNTHASE"/>
    <property type="match status" value="1"/>
</dbReference>
<dbReference type="PANTHER" id="PTHR43775:SF37">
    <property type="entry name" value="SI:DKEY-61P9.11"/>
    <property type="match status" value="1"/>
</dbReference>
<dbReference type="Pfam" id="PF00698">
    <property type="entry name" value="Acyl_transf_1"/>
    <property type="match status" value="1"/>
</dbReference>
<dbReference type="Pfam" id="PF22621">
    <property type="entry name" value="CurL-like_PKS_C"/>
    <property type="match status" value="1"/>
</dbReference>
<dbReference type="Pfam" id="PF00109">
    <property type="entry name" value="ketoacyl-synt"/>
    <property type="match status" value="1"/>
</dbReference>
<dbReference type="Pfam" id="PF02801">
    <property type="entry name" value="Ketoacyl-synt_C"/>
    <property type="match status" value="1"/>
</dbReference>
<dbReference type="Pfam" id="PF21089">
    <property type="entry name" value="PKS_DH_N"/>
    <property type="match status" value="1"/>
</dbReference>
<dbReference type="Pfam" id="PF00550">
    <property type="entry name" value="PP-binding"/>
    <property type="match status" value="1"/>
</dbReference>
<dbReference type="Pfam" id="PF14765">
    <property type="entry name" value="PS-DH"/>
    <property type="match status" value="1"/>
</dbReference>
<dbReference type="Pfam" id="PF16073">
    <property type="entry name" value="SAT"/>
    <property type="match status" value="1"/>
</dbReference>
<dbReference type="Pfam" id="PF00975">
    <property type="entry name" value="Thioesterase"/>
    <property type="match status" value="1"/>
</dbReference>
<dbReference type="SMART" id="SM00827">
    <property type="entry name" value="PKS_AT"/>
    <property type="match status" value="1"/>
</dbReference>
<dbReference type="SMART" id="SM00825">
    <property type="entry name" value="PKS_KS"/>
    <property type="match status" value="1"/>
</dbReference>
<dbReference type="SMART" id="SM00823">
    <property type="entry name" value="PKS_PP"/>
    <property type="match status" value="1"/>
</dbReference>
<dbReference type="SMART" id="SM00824">
    <property type="entry name" value="PKS_TE"/>
    <property type="match status" value="1"/>
</dbReference>
<dbReference type="SUPFAM" id="SSF47336">
    <property type="entry name" value="ACP-like"/>
    <property type="match status" value="1"/>
</dbReference>
<dbReference type="SUPFAM" id="SSF53474">
    <property type="entry name" value="alpha/beta-Hydrolases"/>
    <property type="match status" value="1"/>
</dbReference>
<dbReference type="SUPFAM" id="SSF52151">
    <property type="entry name" value="FabD/lysophospholipase-like"/>
    <property type="match status" value="1"/>
</dbReference>
<dbReference type="SUPFAM" id="SSF55048">
    <property type="entry name" value="Probable ACP-binding domain of malonyl-CoA ACP transacylase"/>
    <property type="match status" value="1"/>
</dbReference>
<dbReference type="SUPFAM" id="SSF53901">
    <property type="entry name" value="Thiolase-like"/>
    <property type="match status" value="1"/>
</dbReference>
<dbReference type="PROSITE" id="PS50075">
    <property type="entry name" value="CARRIER"/>
    <property type="match status" value="1"/>
</dbReference>
<dbReference type="PROSITE" id="PS52004">
    <property type="entry name" value="KS3_2"/>
    <property type="match status" value="1"/>
</dbReference>
<dbReference type="PROSITE" id="PS52019">
    <property type="entry name" value="PKS_MFAS_DH"/>
    <property type="match status" value="1"/>
</dbReference>
<protein>
    <recommendedName>
        <fullName evidence="8">Non-reducing polyketide synthase atnG</fullName>
        <shortName evidence="8">NR-PKS atnG</shortName>
        <ecNumber evidence="7">2.3.1.-</ecNumber>
    </recommendedName>
    <alternativeName>
        <fullName evidence="8">Arthripenoid biosynthesis cluster protein G</fullName>
    </alternativeName>
</protein>
<evidence type="ECO:0000255" key="1"/>
<evidence type="ECO:0000255" key="2">
    <source>
        <dbReference type="PROSITE-ProRule" id="PRU00258"/>
    </source>
</evidence>
<evidence type="ECO:0000255" key="3">
    <source>
        <dbReference type="PROSITE-ProRule" id="PRU01348"/>
    </source>
</evidence>
<evidence type="ECO:0000255" key="4">
    <source>
        <dbReference type="PROSITE-ProRule" id="PRU01363"/>
    </source>
</evidence>
<evidence type="ECO:0000255" key="5">
    <source>
        <dbReference type="PROSITE-ProRule" id="PRU10022"/>
    </source>
</evidence>
<evidence type="ECO:0000256" key="6">
    <source>
        <dbReference type="SAM" id="MobiDB-lite"/>
    </source>
</evidence>
<evidence type="ECO:0000269" key="7">
    <source>
    </source>
</evidence>
<evidence type="ECO:0000303" key="8">
    <source>
    </source>
</evidence>
<evidence type="ECO:0000305" key="9">
    <source>
    </source>
</evidence>
<keyword id="KW-0012">Acyltransferase</keyword>
<keyword id="KW-0511">Multifunctional enzyme</keyword>
<keyword id="KW-0596">Phosphopantetheine</keyword>
<keyword id="KW-0597">Phosphoprotein</keyword>
<keyword id="KW-0808">Transferase</keyword>
<feature type="chain" id="PRO_0000452559" description="Non-reducing polyketide synthase atnG">
    <location>
        <begin position="1"/>
        <end position="1996"/>
    </location>
</feature>
<feature type="domain" description="Ketosynthase family 3 (KS3)" evidence="3 9">
    <location>
        <begin position="366"/>
        <end position="794"/>
    </location>
</feature>
<feature type="domain" description="PKS/mFAS DH" evidence="4">
    <location>
        <begin position="1263"/>
        <end position="1569"/>
    </location>
</feature>
<feature type="domain" description="Carrier" evidence="2 9">
    <location>
        <begin position="1620"/>
        <end position="1697"/>
    </location>
</feature>
<feature type="region of interest" description="N-terminal acylcarrier protein transacylase (SAT) domain" evidence="1 9">
    <location>
        <begin position="9"/>
        <end position="245"/>
    </location>
</feature>
<feature type="region of interest" description="Malonyl-CoA:ACP transacylase (MAT) domain" evidence="1 9">
    <location>
        <begin position="891"/>
        <end position="1150"/>
    </location>
</feature>
<feature type="region of interest" description="N-terminal hotdog fold" evidence="4">
    <location>
        <begin position="1263"/>
        <end position="1392"/>
    </location>
</feature>
<feature type="region of interest" description="Product template (PT) domain" evidence="1 9">
    <location>
        <begin position="1267"/>
        <end position="1568"/>
    </location>
</feature>
<feature type="region of interest" description="C-terminal hotdog fold" evidence="4">
    <location>
        <begin position="1416"/>
        <end position="1569"/>
    </location>
</feature>
<feature type="region of interest" description="Disordered" evidence="6">
    <location>
        <begin position="1573"/>
        <end position="1621"/>
    </location>
</feature>
<feature type="region of interest" description="Thioesterase (TE) domain" evidence="1 9">
    <location>
        <begin position="1725"/>
        <end position="1923"/>
    </location>
</feature>
<feature type="compositionally biased region" description="Polar residues" evidence="6">
    <location>
        <begin position="1594"/>
        <end position="1607"/>
    </location>
</feature>
<feature type="active site" description="For beta-ketoacyl synthase activity" evidence="3">
    <location>
        <position position="538"/>
    </location>
</feature>
<feature type="active site" description="For beta-ketoacyl synthase activity" evidence="3">
    <location>
        <position position="673"/>
    </location>
</feature>
<feature type="active site" description="For beta-ketoacyl synthase activity" evidence="3">
    <location>
        <position position="713"/>
    </location>
</feature>
<feature type="active site" description="For acyl/malonyl transferase activity" evidence="5">
    <location>
        <position position="982"/>
    </location>
</feature>
<feature type="active site" description="Proton acceptor; for dehydratase activity" evidence="4">
    <location>
        <position position="1295"/>
    </location>
</feature>
<feature type="active site" description="Proton donor; for dehydratase activity" evidence="4">
    <location>
        <position position="1481"/>
    </location>
</feature>
<feature type="modified residue" description="O-(pantetheine 4'-phosphoryl)serine" evidence="2">
    <location>
        <position position="1657"/>
    </location>
</feature>
<gene>
    <name evidence="8" type="primary">atnG</name>
</gene>
<comment type="function">
    <text evidence="7 9">Non-reducing polyketide synthase; part of the gene cluster that mediates the biosynthesis of the meroterpenoids arthripenoids (PubMed:29797385). The pathway begins with the HR-PKS atnH that catalyzes two chain-extension steps to form a reduced triketide, which then primes the SAT domain in the NR-PKS atnG to initiate three more cycles of extension to give a linear hexaketide corresponding to the polyketide part of arthripenoids (PubMed:29797385). The FAD-dependent monooxygenase atnJ then performs an oxidative decarboxylation at C11 of the atnH/atnG product, via an electrophilic aromatic hydroxylation with concomitant ipso-decarboxylation (PubMed:29797385). The membrane-bound polyprenyl transferase atnF then introduces a farnesyl group before the FAD-dependent monooxygenase atnK functions as the first epoxidase on terminal C12'-C13' olefin, followed by a second epoxidation on C7'-C8' catalyzed by atnA (PubMed:29797385). The terpene cyclase/mutase atnI then initiates the sequential tricyclic ring formation through protonation of the terminal epoxide and catalyzes the regioselective and stereoselective 6/6/6-tricyclic ring formation (PubMed:29797385). The cytochrome P450 monooxygenase atnM is responsible for hydroxylating both C1' and C10' (Probable). The next steps may involve ketoreduction and acetyl transfer by the ketoreductase atnB and the acetyltransferase atnC, and lead to the production of arthripenoid B, the final biosynthetic product of the atn cluster (PubMed:29797385). The hydroquinone moiety in arthripenoid B is prone to undergo spontaneous oxidation to afford a benzoquinone compound, a key intermediate for generating structure diversity (Probable). For instance, addition of a cysteine followed by ring contraction gives arthripenoid A, tautomerization gives the main product arthripenoid C, addition of a molecular of water or amine affords arthripenoid D or E, respectively, and loss of one water forms arthripenoid F (Probable).</text>
</comment>
<comment type="pathway">
    <text evidence="7">Secondary metabolite biosynthesis; terpenoid biosynthesis.</text>
</comment>
<comment type="domain">
    <text evidence="9">Multidomain protein; including a starter unit:ACP transacylase (SAT) that selects the starter unit; a ketosynthase (KS) that catalyzes repeated decarboxylative condensation to elongate the polyketide backbone; a malonyl-CoA:ACP transacylase (MAT) that selects and transfers the extender unit malonyl-CoA; a product template (PT) domain that controls the immediate cyclization regioselectivity of the reactive polyketide backbone; and an acyl-carrier protein (ACP) that serves as the tether of the growing and completed polyketide via its phosphopantetheinyl arm.</text>
</comment>
<comment type="domain">
    <text evidence="9">The SAT domain at the N-terminus facilitates crosstalk between the two PKSs atnH and atnG encoded by the cluster.</text>
</comment>
<comment type="domain">
    <text evidence="9">The release of the polyketide chain from the non-reducing polyketide synthase is mediated by the thioesterase (TE) domain localized at the C-ter of the protein.</text>
</comment>
<comment type="disruption phenotype">
    <text evidence="7">Abolishes the production of arthripenoids.</text>
</comment>
<sequence length="1996" mass="216162">MDVAAQHVFLFGDQADAPMPMVRRVVERSRHSKNLESFLQSAIDNVQLEVARLTPAERDTIGPFHSLEGLADSLKEKSDRHGIAQMVSVFIARIGELILHAENDPALLDSSTPLLSLGICGGLLPAAAVAAATNIHELIEVASYLARVNCRVAVAISRRSIEIESGPGSWAFSVLGSAVAQLPDILEDFHREQSIPRHRRAWIAVSTPTWATVFGPPSVLSKLRETSITLKKSDAAELPAFGAVHAAHLVAPNFGDLVGESPLLNRPLKTGYKLLSGSKYAPYNATTLKDLLPQIMLDIFQNETNPARVFDVGGSYLRKGGPISLYMLGATSYLVLLRRSLHTQKFEVNLKTNPPSLQNSELRGGSGSVAVIGMSGQFPGAASVDELWDVLMRREERHRKIPIERFNADDYLDETGRGSSAITTAYGCFLENPGLFDHKMFNVSPREAMQMDPGQRLLLHGVYTALEDAGLVTGSSTAADNKRISTYIGDGSDDWRDLQSQHGVDKYIVQGTQRSFTPGRINHHFKWEGATWLVDAACGSTASAVGLAYRALINRDCDTAVAGGANIIATPFWHSALSKGGFLSKTGGCKTFRADADGYCRGEAVGVVVLKRLEDALQDNDNIVSVIRGYSRNHSADTVSITRPHVPAQMRAYQAVLHNSGLEPEDISYVEMHGTGTTAGDSAELESIVNVLAQKNTRETPLVVGAIKANLGHSEAASGISSLIKASLTFRKGMVPPQVGIPEKMGSFACLDHGTVHVPGAPVSFTRESVGKTRAMVMNNFDAAGGNSCFVLEEPPTPSLKSADPRPYHVVTVSAHCQTSLEENKRQLLQFLTENKETSLADLSYTTTARRMHHTLRSAYTGGSIQDIINSLGRDLGKNHGQDKPGAPRVAFAFTGQGAHYAGMGADLFKVSQPFRTTITGLQKICVTHGFPQFAHLISDPSTPMENVSTAQIHLSLAALEIALVDLWKILGISPDLVIGHSIGEYAALYAAGVLSATDAMYLVGTRAMLLQDSLEEGVNGMLSISGTPQDVAAIVSDESVMADCEVACHNSPGMVVLGGRRPRLAELEELLRARKFKCKLLDVPYAMHSSQLDTILPGFRKAARGVCFGTPTIKVISTLTGTEQQHFDSEYLVRQTRESVKYTQAISHCLSQGLVDSATLWLEIGPGPVCLGLIRSNTNVATNLAMPSLKKDDQNWKSISSALASLYVAGKAIGWREYHSDFIDSLSLISLPSYAFDNRNFWMPYTTGGKHQDVQPISTCLHHLVSQDDNGKEQSATFTAVVSQPSLLKMIQGHKLSGITVCPAGVFAEMALTAARYVLTGGSFSAPVPSLSVIDIQIDHPITPQSGSQQVIQVNVRRPKQSRDFAVSIVDQAKPSLITAKCCIRQTDEQDVIATRRQQLDMIRPKISKLMQDAASGIANRFQGKLFYKLFANLMDYGGQYEGVKEAIVGDDFTEALATIRLPKAQDSNESCTLSPYWIDALTHLVGFLLNGNPMNSGDDVYIGTQMERMEILAKDFSPDVVYQSYAYLEPSQDSVNYRGHVYILSGDSIVGFLEGARFRKMPRTTLHRILGKAVPPKPAKETSHPSVEATAPATTNGRSSATNAQAEAPAPPVNGSNGHRKTVESVLIACLIEETGMEESEILPSTFFAEIGVDSLMSISILSEIKNETGVELNASFLMEYPTLGDAQRQLRTLERKREGANPSTNGTDVAVVVNGEKPAKPKRECNVVLMQGQAPEDSSSIPLFLLADGAGSAAAYIHLPKLGLEDDLAVYAVESPWVRDPAEFTCSFEEAAALYLAAVRAKQPRGPYLLGGWSGGGVFSYEVARRLLAAGERVLGLVVIDIRAPSLRPNPHAAAPTMDIIDQIGMLSGIERTFADDASPEAARLKRHMLSTVTCFSRLVPTPMPPHLRPERTFVVWAKKDVLPKAAYDQLPPGLDAWFYPASHDMGPNGWDELVGDAVEYSQVEGDHFSIMTFPEVTELGRVLQAAVAKCRV</sequence>